<sequence>MIALIIGMLVSLIVTLVGTPLLIRLVHKLHYGQYIRQDGPQSHLVKRGTPTLGGVVINFAILLGWASSALYRYLRSGDVPSWSAALVLFAMLSMGLLGFIDDFAKVRKKQNEGLSVGGKFIGQFIFATIYAVLALLIPTKSGFPSAQAGISFIEQPFFNFDFAGRAVAIILFVIWVNFLMTAWTNAVNLTDGLDGLAAGSSMIAFTGFGIIAFWESYHIKGGSHGGYSYAVSDPLDLTVIAVCAAVACFGFLWYNSNPASIFMGDTGSLALGGLFAALSIATHTEFLAVVLGGLYVMEAMSDVIQVGYFKMTHKRVFKMAPIHHHFELEGWTETKVVVRFWMIELIFVLLALTIFYGDWVTRSGLLFS</sequence>
<reference key="1">
    <citation type="journal article" date="2008" name="BMC Genomics">
        <title>Comparative genomic analysis of the gut bacterium Bifidobacterium longum reveals loci susceptible to deletion during pure culture growth.</title>
        <authorList>
            <person name="Lee J.H."/>
            <person name="Karamychev V.N."/>
            <person name="Kozyavkin S.A."/>
            <person name="Mills D."/>
            <person name="Pavlov A.R."/>
            <person name="Pavlova N.V."/>
            <person name="Polouchine N.N."/>
            <person name="Richardson P.M."/>
            <person name="Shakhova V.V."/>
            <person name="Slesarev A.I."/>
            <person name="Weimer B."/>
            <person name="O'Sullivan D.J."/>
        </authorList>
    </citation>
    <scope>NUCLEOTIDE SEQUENCE [LARGE SCALE GENOMIC DNA]</scope>
    <source>
        <strain>DJO10A</strain>
    </source>
</reference>
<comment type="function">
    <text evidence="1">Catalyzes the initial step of the lipid cycle reactions in the biosynthesis of the cell wall peptidoglycan: transfers peptidoglycan precursor phospho-MurNAc-pentapeptide from UDP-MurNAc-pentapeptide onto the lipid carrier undecaprenyl phosphate, yielding undecaprenyl-pyrophosphoryl-MurNAc-pentapeptide, known as lipid I.</text>
</comment>
<comment type="catalytic activity">
    <reaction evidence="1">
        <text>UDP-N-acetyl-alpha-D-muramoyl-L-alanyl-gamma-D-glutamyl-meso-2,6-diaminopimeloyl-D-alanyl-D-alanine + di-trans,octa-cis-undecaprenyl phosphate = di-trans,octa-cis-undecaprenyl diphospho-N-acetyl-alpha-D-muramoyl-L-alanyl-D-glutamyl-meso-2,6-diaminopimeloyl-D-alanyl-D-alanine + UMP</text>
        <dbReference type="Rhea" id="RHEA:28386"/>
        <dbReference type="ChEBI" id="CHEBI:57865"/>
        <dbReference type="ChEBI" id="CHEBI:60392"/>
        <dbReference type="ChEBI" id="CHEBI:61386"/>
        <dbReference type="ChEBI" id="CHEBI:61387"/>
        <dbReference type="EC" id="2.7.8.13"/>
    </reaction>
</comment>
<comment type="cofactor">
    <cofactor evidence="1">
        <name>Mg(2+)</name>
        <dbReference type="ChEBI" id="CHEBI:18420"/>
    </cofactor>
</comment>
<comment type="pathway">
    <text evidence="1">Cell wall biogenesis; peptidoglycan biosynthesis.</text>
</comment>
<comment type="subcellular location">
    <subcellularLocation>
        <location evidence="1">Cell membrane</location>
        <topology evidence="1">Multi-pass membrane protein</topology>
    </subcellularLocation>
</comment>
<comment type="similarity">
    <text evidence="1">Belongs to the glycosyltransferase 4 family. MraY subfamily.</text>
</comment>
<accession>B3DQM8</accession>
<feature type="chain" id="PRO_1000090593" description="Phospho-N-acetylmuramoyl-pentapeptide-transferase">
    <location>
        <begin position="1"/>
        <end position="368"/>
    </location>
</feature>
<feature type="transmembrane region" description="Helical" evidence="1">
    <location>
        <begin position="2"/>
        <end position="22"/>
    </location>
</feature>
<feature type="transmembrane region" description="Helical" evidence="1">
    <location>
        <begin position="51"/>
        <end position="71"/>
    </location>
</feature>
<feature type="transmembrane region" description="Helical" evidence="1">
    <location>
        <begin position="80"/>
        <end position="100"/>
    </location>
</feature>
<feature type="transmembrane region" description="Helical" evidence="1">
    <location>
        <begin position="117"/>
        <end position="137"/>
    </location>
</feature>
<feature type="transmembrane region" description="Helical" evidence="1">
    <location>
        <begin position="167"/>
        <end position="187"/>
    </location>
</feature>
<feature type="transmembrane region" description="Helical" evidence="1">
    <location>
        <begin position="193"/>
        <end position="213"/>
    </location>
</feature>
<feature type="transmembrane region" description="Helical" evidence="1">
    <location>
        <begin position="234"/>
        <end position="254"/>
    </location>
</feature>
<feature type="transmembrane region" description="Helical" evidence="1">
    <location>
        <begin position="271"/>
        <end position="291"/>
    </location>
</feature>
<feature type="transmembrane region" description="Helical" evidence="1">
    <location>
        <begin position="340"/>
        <end position="360"/>
    </location>
</feature>
<proteinExistence type="inferred from homology"/>
<protein>
    <recommendedName>
        <fullName evidence="1">Phospho-N-acetylmuramoyl-pentapeptide-transferase</fullName>
        <ecNumber evidence="1">2.7.8.13</ecNumber>
    </recommendedName>
    <alternativeName>
        <fullName evidence="1">UDP-MurNAc-pentapeptide phosphotransferase</fullName>
    </alternativeName>
</protein>
<dbReference type="EC" id="2.7.8.13" evidence="1"/>
<dbReference type="EMBL" id="CP000605">
    <property type="protein sequence ID" value="ACD97624.1"/>
    <property type="molecule type" value="Genomic_DNA"/>
</dbReference>
<dbReference type="RefSeq" id="WP_007052547.1">
    <property type="nucleotide sequence ID" value="NZ_AABM02000003.1"/>
</dbReference>
<dbReference type="SMR" id="B3DQM8"/>
<dbReference type="GeneID" id="69578495"/>
<dbReference type="KEGG" id="blj:BLD_0178"/>
<dbReference type="HOGENOM" id="CLU_023982_0_1_11"/>
<dbReference type="UniPathway" id="UPA00219"/>
<dbReference type="Proteomes" id="UP000002419">
    <property type="component" value="Chromosome"/>
</dbReference>
<dbReference type="GO" id="GO:0005886">
    <property type="term" value="C:plasma membrane"/>
    <property type="evidence" value="ECO:0007669"/>
    <property type="project" value="UniProtKB-SubCell"/>
</dbReference>
<dbReference type="GO" id="GO:0046872">
    <property type="term" value="F:metal ion binding"/>
    <property type="evidence" value="ECO:0007669"/>
    <property type="project" value="UniProtKB-KW"/>
</dbReference>
<dbReference type="GO" id="GO:0008963">
    <property type="term" value="F:phospho-N-acetylmuramoyl-pentapeptide-transferase activity"/>
    <property type="evidence" value="ECO:0007669"/>
    <property type="project" value="UniProtKB-UniRule"/>
</dbReference>
<dbReference type="GO" id="GO:0051992">
    <property type="term" value="F:UDP-N-acetylmuramoyl-L-alanyl-D-glutamyl-meso-2,6-diaminopimelyl-D-alanyl-D-alanine:undecaprenyl-phosphate transferase activity"/>
    <property type="evidence" value="ECO:0007669"/>
    <property type="project" value="RHEA"/>
</dbReference>
<dbReference type="GO" id="GO:0051301">
    <property type="term" value="P:cell division"/>
    <property type="evidence" value="ECO:0007669"/>
    <property type="project" value="UniProtKB-KW"/>
</dbReference>
<dbReference type="GO" id="GO:0071555">
    <property type="term" value="P:cell wall organization"/>
    <property type="evidence" value="ECO:0007669"/>
    <property type="project" value="UniProtKB-KW"/>
</dbReference>
<dbReference type="GO" id="GO:0009252">
    <property type="term" value="P:peptidoglycan biosynthetic process"/>
    <property type="evidence" value="ECO:0007669"/>
    <property type="project" value="UniProtKB-UniRule"/>
</dbReference>
<dbReference type="GO" id="GO:0008360">
    <property type="term" value="P:regulation of cell shape"/>
    <property type="evidence" value="ECO:0007669"/>
    <property type="project" value="UniProtKB-KW"/>
</dbReference>
<dbReference type="CDD" id="cd06852">
    <property type="entry name" value="GT_MraY"/>
    <property type="match status" value="1"/>
</dbReference>
<dbReference type="HAMAP" id="MF_00038">
    <property type="entry name" value="MraY"/>
    <property type="match status" value="1"/>
</dbReference>
<dbReference type="InterPro" id="IPR000715">
    <property type="entry name" value="Glycosyl_transferase_4"/>
</dbReference>
<dbReference type="InterPro" id="IPR003524">
    <property type="entry name" value="PNAcMuramoyl-5peptid_Trfase"/>
</dbReference>
<dbReference type="InterPro" id="IPR018480">
    <property type="entry name" value="PNAcMuramoyl-5peptid_Trfase_CS"/>
</dbReference>
<dbReference type="NCBIfam" id="TIGR00445">
    <property type="entry name" value="mraY"/>
    <property type="match status" value="1"/>
</dbReference>
<dbReference type="PANTHER" id="PTHR22926">
    <property type="entry name" value="PHOSPHO-N-ACETYLMURAMOYL-PENTAPEPTIDE-TRANSFERASE"/>
    <property type="match status" value="1"/>
</dbReference>
<dbReference type="PANTHER" id="PTHR22926:SF5">
    <property type="entry name" value="PHOSPHO-N-ACETYLMURAMOYL-PENTAPEPTIDE-TRANSFERASE HOMOLOG"/>
    <property type="match status" value="1"/>
</dbReference>
<dbReference type="Pfam" id="PF00953">
    <property type="entry name" value="Glycos_transf_4"/>
    <property type="match status" value="1"/>
</dbReference>
<dbReference type="PROSITE" id="PS01348">
    <property type="entry name" value="MRAY_2"/>
    <property type="match status" value="1"/>
</dbReference>
<organism>
    <name type="scientific">Bifidobacterium longum (strain DJO10A)</name>
    <dbReference type="NCBI Taxonomy" id="205913"/>
    <lineage>
        <taxon>Bacteria</taxon>
        <taxon>Bacillati</taxon>
        <taxon>Actinomycetota</taxon>
        <taxon>Actinomycetes</taxon>
        <taxon>Bifidobacteriales</taxon>
        <taxon>Bifidobacteriaceae</taxon>
        <taxon>Bifidobacterium</taxon>
    </lineage>
</organism>
<gene>
    <name evidence="1" type="primary">mraY</name>
    <name type="ordered locus">BLD_0178</name>
</gene>
<evidence type="ECO:0000255" key="1">
    <source>
        <dbReference type="HAMAP-Rule" id="MF_00038"/>
    </source>
</evidence>
<keyword id="KW-0131">Cell cycle</keyword>
<keyword id="KW-0132">Cell division</keyword>
<keyword id="KW-1003">Cell membrane</keyword>
<keyword id="KW-0133">Cell shape</keyword>
<keyword id="KW-0961">Cell wall biogenesis/degradation</keyword>
<keyword id="KW-0460">Magnesium</keyword>
<keyword id="KW-0472">Membrane</keyword>
<keyword id="KW-0479">Metal-binding</keyword>
<keyword id="KW-0573">Peptidoglycan synthesis</keyword>
<keyword id="KW-0808">Transferase</keyword>
<keyword id="KW-0812">Transmembrane</keyword>
<keyword id="KW-1133">Transmembrane helix</keyword>
<name>MRAY_BIFLD</name>